<proteinExistence type="inferred from homology"/>
<dbReference type="EC" id="4.2.1.33"/>
<dbReference type="EMBL" id="AE000666">
    <property type="protein sequence ID" value="AAB85864.1"/>
    <property type="molecule type" value="Genomic_DNA"/>
</dbReference>
<dbReference type="PIR" id="E69051">
    <property type="entry name" value="E69051"/>
</dbReference>
<dbReference type="RefSeq" id="WP_010876999.1">
    <property type="nucleotide sequence ID" value="NC_000916.1"/>
</dbReference>
<dbReference type="SMR" id="O27440"/>
<dbReference type="FunCoup" id="O27440">
    <property type="interactions" value="77"/>
</dbReference>
<dbReference type="STRING" id="187420.MTH_1387"/>
<dbReference type="PaxDb" id="187420-MTH_1387"/>
<dbReference type="EnsemblBacteria" id="AAB85864">
    <property type="protein sequence ID" value="AAB85864"/>
    <property type="gene ID" value="MTH_1387"/>
</dbReference>
<dbReference type="KEGG" id="mth:MTH_1387"/>
<dbReference type="PATRIC" id="fig|187420.15.peg.1352"/>
<dbReference type="HOGENOM" id="CLU_081378_1_1_2"/>
<dbReference type="InParanoid" id="O27440"/>
<dbReference type="UniPathway" id="UPA00048">
    <property type="reaction ID" value="UER00071"/>
</dbReference>
<dbReference type="Proteomes" id="UP000005223">
    <property type="component" value="Chromosome"/>
</dbReference>
<dbReference type="GO" id="GO:0003861">
    <property type="term" value="F:3-isopropylmalate dehydratase activity"/>
    <property type="evidence" value="ECO:0007669"/>
    <property type="project" value="UniProtKB-UniRule"/>
</dbReference>
<dbReference type="GO" id="GO:0009098">
    <property type="term" value="P:L-leucine biosynthetic process"/>
    <property type="evidence" value="ECO:0007669"/>
    <property type="project" value="UniProtKB-UniRule"/>
</dbReference>
<dbReference type="CDD" id="cd01577">
    <property type="entry name" value="IPMI_Swivel"/>
    <property type="match status" value="1"/>
</dbReference>
<dbReference type="FunFam" id="3.20.19.10:FF:000007">
    <property type="entry name" value="Isopropylmalate/citramalate isomerase small subunit"/>
    <property type="match status" value="1"/>
</dbReference>
<dbReference type="Gene3D" id="3.20.19.10">
    <property type="entry name" value="Aconitase, domain 4"/>
    <property type="match status" value="1"/>
</dbReference>
<dbReference type="HAMAP" id="MF_01032">
    <property type="entry name" value="LeuD_type2"/>
    <property type="match status" value="1"/>
</dbReference>
<dbReference type="InterPro" id="IPR015928">
    <property type="entry name" value="Aconitase/3IPM_dehydase_swvl"/>
</dbReference>
<dbReference type="InterPro" id="IPR000573">
    <property type="entry name" value="AconitaseA/IPMdHydase_ssu_swvl"/>
</dbReference>
<dbReference type="InterPro" id="IPR033940">
    <property type="entry name" value="IPMI_Swivel"/>
</dbReference>
<dbReference type="InterPro" id="IPR050075">
    <property type="entry name" value="LeuD"/>
</dbReference>
<dbReference type="InterPro" id="IPR011827">
    <property type="entry name" value="LeuD_type2/HacB/DmdB"/>
</dbReference>
<dbReference type="NCBIfam" id="TIGR02087">
    <property type="entry name" value="LEUD_arch"/>
    <property type="match status" value="1"/>
</dbReference>
<dbReference type="PANTHER" id="PTHR43345:SF2">
    <property type="entry name" value="3-ISOPROPYLMALATE DEHYDRATASE SMALL SUBUNIT 1"/>
    <property type="match status" value="1"/>
</dbReference>
<dbReference type="PANTHER" id="PTHR43345">
    <property type="entry name" value="3-ISOPROPYLMALATE DEHYDRATASE SMALL SUBUNIT 2-RELATED-RELATED"/>
    <property type="match status" value="1"/>
</dbReference>
<dbReference type="Pfam" id="PF00694">
    <property type="entry name" value="Aconitase_C"/>
    <property type="match status" value="1"/>
</dbReference>
<dbReference type="SUPFAM" id="SSF52016">
    <property type="entry name" value="LeuD/IlvD-like"/>
    <property type="match status" value="1"/>
</dbReference>
<reference key="1">
    <citation type="journal article" date="1997" name="J. Bacteriol.">
        <title>Complete genome sequence of Methanobacterium thermoautotrophicum deltaH: functional analysis and comparative genomics.</title>
        <authorList>
            <person name="Smith D.R."/>
            <person name="Doucette-Stamm L.A."/>
            <person name="Deloughery C."/>
            <person name="Lee H.-M."/>
            <person name="Dubois J."/>
            <person name="Aldredge T."/>
            <person name="Bashirzadeh R."/>
            <person name="Blakely D."/>
            <person name="Cook R."/>
            <person name="Gilbert K."/>
            <person name="Harrison D."/>
            <person name="Hoang L."/>
            <person name="Keagle P."/>
            <person name="Lumm W."/>
            <person name="Pothier B."/>
            <person name="Qiu D."/>
            <person name="Spadafora R."/>
            <person name="Vicare R."/>
            <person name="Wang Y."/>
            <person name="Wierzbowski J."/>
            <person name="Gibson R."/>
            <person name="Jiwani N."/>
            <person name="Caruso A."/>
            <person name="Bush D."/>
            <person name="Safer H."/>
            <person name="Patwell D."/>
            <person name="Prabhakar S."/>
            <person name="McDougall S."/>
            <person name="Shimer G."/>
            <person name="Goyal A."/>
            <person name="Pietrovski S."/>
            <person name="Church G.M."/>
            <person name="Daniels C.J."/>
            <person name="Mao J.-I."/>
            <person name="Rice P."/>
            <person name="Noelling J."/>
            <person name="Reeve J.N."/>
        </authorList>
    </citation>
    <scope>NUCLEOTIDE SEQUENCE [LARGE SCALE GENOMIC DNA]</scope>
    <source>
        <strain>ATCC 29096 / DSM 1053 / JCM 10044 / NBRC 100330 / Delta H</strain>
    </source>
</reference>
<accession>O27440</accession>
<comment type="function">
    <text evidence="1">Catalyzes the isomerization between 2-isopropylmalate and 3-isopropylmalate, via the formation of 2-isopropylmaleate.</text>
</comment>
<comment type="catalytic activity">
    <reaction>
        <text>(2R,3S)-3-isopropylmalate = (2S)-2-isopropylmalate</text>
        <dbReference type="Rhea" id="RHEA:32287"/>
        <dbReference type="ChEBI" id="CHEBI:1178"/>
        <dbReference type="ChEBI" id="CHEBI:35121"/>
        <dbReference type="EC" id="4.2.1.33"/>
    </reaction>
</comment>
<comment type="pathway">
    <text>Amino-acid biosynthesis; L-leucine biosynthesis; L-leucine from 3-methyl-2-oxobutanoate: step 2/4.</text>
</comment>
<comment type="subunit">
    <text evidence="1">Heterodimer of LeuC and LeuD.</text>
</comment>
<comment type="similarity">
    <text evidence="2">Belongs to the LeuD family. LeuD type 2 subfamily.</text>
</comment>
<feature type="chain" id="PRO_0000141943" description="3-isopropylmalate dehydratase small subunit">
    <location>
        <begin position="1"/>
        <end position="162"/>
    </location>
</feature>
<name>LEUD_METTH</name>
<sequence>MKGKVWKFPDDVDTDIIIPGRYLVMRDPEKLREHVMEGLDPEFPSKVKPGDFIVAGKNFGCGSSREHAPLALKGAGIAAVIAESFARIFYRNAINVGIPLLEAPGITEKLNEGDEIEVDLDRGVIIRGDDEFPFKKLPDFMVEILEKGGLIPYLKKKGDFKG</sequence>
<gene>
    <name type="primary">leuD</name>
    <name type="ordered locus">MTH_1387</name>
</gene>
<protein>
    <recommendedName>
        <fullName>3-isopropylmalate dehydratase small subunit</fullName>
        <ecNumber>4.2.1.33</ecNumber>
    </recommendedName>
    <alternativeName>
        <fullName>Alpha-IPM isomerase</fullName>
        <shortName>IPMI</shortName>
    </alternativeName>
    <alternativeName>
        <fullName>Isopropylmalate isomerase</fullName>
    </alternativeName>
</protein>
<organism>
    <name type="scientific">Methanothermobacter thermautotrophicus (strain ATCC 29096 / DSM 1053 / JCM 10044 / NBRC 100330 / Delta H)</name>
    <name type="common">Methanobacterium thermoautotrophicum</name>
    <dbReference type="NCBI Taxonomy" id="187420"/>
    <lineage>
        <taxon>Archaea</taxon>
        <taxon>Methanobacteriati</taxon>
        <taxon>Methanobacteriota</taxon>
        <taxon>Methanomada group</taxon>
        <taxon>Methanobacteria</taxon>
        <taxon>Methanobacteriales</taxon>
        <taxon>Methanobacteriaceae</taxon>
        <taxon>Methanothermobacter</taxon>
    </lineage>
</organism>
<keyword id="KW-0028">Amino-acid biosynthesis</keyword>
<keyword id="KW-0100">Branched-chain amino acid biosynthesis</keyword>
<keyword id="KW-0432">Leucine biosynthesis</keyword>
<keyword id="KW-0456">Lyase</keyword>
<keyword id="KW-1185">Reference proteome</keyword>
<evidence type="ECO:0000250" key="1"/>
<evidence type="ECO:0000305" key="2"/>